<accession>Q5RF32</accession>
<comment type="function">
    <text evidence="1">Involved in the regulation of homocysteine metabolism. Converts betaine and homocysteine to dimethylglycine and methionine, respectively. This reaction is also required for the irreversible oxidation of choline (By similarity).</text>
</comment>
<comment type="catalytic activity">
    <reaction>
        <text>S-methyl-L-methionine + L-homocysteine = 2 L-methionine + H(+)</text>
        <dbReference type="Rhea" id="RHEA:26337"/>
        <dbReference type="ChEBI" id="CHEBI:15378"/>
        <dbReference type="ChEBI" id="CHEBI:57844"/>
        <dbReference type="ChEBI" id="CHEBI:58199"/>
        <dbReference type="ChEBI" id="CHEBI:58252"/>
        <dbReference type="EC" id="2.1.1.10"/>
    </reaction>
</comment>
<comment type="cofactor">
    <cofactor evidence="1">
        <name>Zn(2+)</name>
        <dbReference type="ChEBI" id="CHEBI:29105"/>
    </cofactor>
    <text evidence="1">Binds 1 zinc ion per subunit.</text>
</comment>
<comment type="pathway">
    <text>Amino-acid biosynthesis; L-methionine biosynthesis via de novo pathway; L-methionine from L-homocysteine (BhmT route): step 1/1.</text>
</comment>
<comment type="subunit">
    <text evidence="1">Homotetramer.</text>
</comment>
<gene>
    <name type="primary">BHMT2</name>
</gene>
<organism>
    <name type="scientific">Pongo abelii</name>
    <name type="common">Sumatran orangutan</name>
    <name type="synonym">Pongo pygmaeus abelii</name>
    <dbReference type="NCBI Taxonomy" id="9601"/>
    <lineage>
        <taxon>Eukaryota</taxon>
        <taxon>Metazoa</taxon>
        <taxon>Chordata</taxon>
        <taxon>Craniata</taxon>
        <taxon>Vertebrata</taxon>
        <taxon>Euteleostomi</taxon>
        <taxon>Mammalia</taxon>
        <taxon>Eutheria</taxon>
        <taxon>Euarchontoglires</taxon>
        <taxon>Primates</taxon>
        <taxon>Haplorrhini</taxon>
        <taxon>Catarrhini</taxon>
        <taxon>Hominidae</taxon>
        <taxon>Pongo</taxon>
    </lineage>
</organism>
<keyword id="KW-0479">Metal-binding</keyword>
<keyword id="KW-0489">Methyltransferase</keyword>
<keyword id="KW-0597">Phosphoprotein</keyword>
<keyword id="KW-1185">Reference proteome</keyword>
<keyword id="KW-0808">Transferase</keyword>
<keyword id="KW-0862">Zinc</keyword>
<protein>
    <recommendedName>
        <fullName>S-methylmethionine--homocysteine S-methyltransferase BHMT2</fullName>
        <shortName>SMM-hcy methyltransferase</shortName>
        <ecNumber>2.1.1.10</ecNumber>
    </recommendedName>
    <alternativeName>
        <fullName>Betaine--homocysteine S-methyltransferase 2</fullName>
    </alternativeName>
</protein>
<reference key="1">
    <citation type="submission" date="2004-11" db="EMBL/GenBank/DDBJ databases">
        <authorList>
            <consortium name="The German cDNA consortium"/>
        </authorList>
    </citation>
    <scope>NUCLEOTIDE SEQUENCE [LARGE SCALE MRNA]</scope>
    <source>
        <tissue>Kidney</tissue>
    </source>
</reference>
<proteinExistence type="evidence at transcript level"/>
<sequence>MAPAGHPGAKRGILERLESGEVVIGDGSFLITLEKRGYVKAGLWTPEAVIEHPDAVRQLHMEFLRAGSNVMQTFTFSASEDNMESKWEDVNAAACDLAREVAGKGDALVAGGICQTSIYKYHKDEARIKKLFRQQLEVFAWKNVDFLIAEYFEHVEEAVWAVEVLKESDRPVAVTMCISPEGDMHDITPGECAVRLVKAGASIVGVNCRFGPETSLKTIELMKEGLQRAGLKAHLMVQPLGFHTPDCGKEGFVDLPEYPFGLESRAATRWDIQKYAREAYNQGVRYIGGCCGFEPYHIRAIAEELAPERGFLPPASEKHGSWGSALDMHTKPWVRARARREYWENLLPASGRPFCPSLSKPDV</sequence>
<feature type="chain" id="PRO_0000273226" description="S-methylmethionine--homocysteine S-methyltransferase BHMT2">
    <location>
        <begin position="1"/>
        <end position="363"/>
    </location>
</feature>
<feature type="domain" description="Hcy-binding" evidence="3">
    <location>
        <begin position="11"/>
        <end position="305"/>
    </location>
</feature>
<feature type="binding site" evidence="3">
    <location>
        <position position="208"/>
    </location>
    <ligand>
        <name>Zn(2+)</name>
        <dbReference type="ChEBI" id="CHEBI:29105"/>
    </ligand>
</feature>
<feature type="binding site" evidence="3">
    <location>
        <position position="290"/>
    </location>
    <ligand>
        <name>Zn(2+)</name>
        <dbReference type="ChEBI" id="CHEBI:29105"/>
    </ligand>
</feature>
<feature type="binding site" evidence="3">
    <location>
        <position position="291"/>
    </location>
    <ligand>
        <name>Zn(2+)</name>
        <dbReference type="ChEBI" id="CHEBI:29105"/>
    </ligand>
</feature>
<feature type="modified residue" description="Phosphoserine" evidence="2">
    <location>
        <position position="321"/>
    </location>
</feature>
<evidence type="ECO:0000250" key="1"/>
<evidence type="ECO:0000250" key="2">
    <source>
        <dbReference type="UniProtKB" id="Q9H2M3"/>
    </source>
</evidence>
<evidence type="ECO:0000255" key="3">
    <source>
        <dbReference type="PROSITE-ProRule" id="PRU00333"/>
    </source>
</evidence>
<dbReference type="EC" id="2.1.1.10"/>
<dbReference type="EMBL" id="CR857329">
    <property type="protein sequence ID" value="CAH89625.1"/>
    <property type="molecule type" value="mRNA"/>
</dbReference>
<dbReference type="RefSeq" id="NP_001127177.1">
    <property type="nucleotide sequence ID" value="NM_001133705.2"/>
</dbReference>
<dbReference type="SMR" id="Q5RF32"/>
<dbReference type="FunCoup" id="Q5RF32">
    <property type="interactions" value="147"/>
</dbReference>
<dbReference type="STRING" id="9601.ENSPPYP00000024408"/>
<dbReference type="Ensembl" id="ENSPPYT00000018128.2">
    <property type="protein sequence ID" value="ENSPPYP00000017422.1"/>
    <property type="gene ID" value="ENSPPYG00000015585.3"/>
</dbReference>
<dbReference type="GeneID" id="100174229"/>
<dbReference type="KEGG" id="pon:100174229"/>
<dbReference type="CTD" id="23743"/>
<dbReference type="eggNOG" id="KOG1579">
    <property type="taxonomic scope" value="Eukaryota"/>
</dbReference>
<dbReference type="GeneTree" id="ENSGT00390000003122"/>
<dbReference type="HOGENOM" id="CLU_047457_0_0_1"/>
<dbReference type="InParanoid" id="Q5RF32"/>
<dbReference type="OrthoDB" id="261426at2759"/>
<dbReference type="UniPathway" id="UPA00051">
    <property type="reaction ID" value="UER00083"/>
</dbReference>
<dbReference type="Proteomes" id="UP000001595">
    <property type="component" value="Chromosome 5"/>
</dbReference>
<dbReference type="GO" id="GO:0005829">
    <property type="term" value="C:cytosol"/>
    <property type="evidence" value="ECO:0007669"/>
    <property type="project" value="TreeGrafter"/>
</dbReference>
<dbReference type="GO" id="GO:0061627">
    <property type="term" value="F:S-methylmethionine-homocysteine S-methyltransferase activity"/>
    <property type="evidence" value="ECO:0007669"/>
    <property type="project" value="RHEA"/>
</dbReference>
<dbReference type="GO" id="GO:0008270">
    <property type="term" value="F:zinc ion binding"/>
    <property type="evidence" value="ECO:0007669"/>
    <property type="project" value="InterPro"/>
</dbReference>
<dbReference type="GO" id="GO:0071267">
    <property type="term" value="P:L-methionine salvage"/>
    <property type="evidence" value="ECO:0007669"/>
    <property type="project" value="TreeGrafter"/>
</dbReference>
<dbReference type="GO" id="GO:0032259">
    <property type="term" value="P:methylation"/>
    <property type="evidence" value="ECO:0007669"/>
    <property type="project" value="UniProtKB-KW"/>
</dbReference>
<dbReference type="FunFam" id="3.20.20.330:FF:000003">
    <property type="entry name" value="Betaine--homocysteine S-methyltransferase 1"/>
    <property type="match status" value="1"/>
</dbReference>
<dbReference type="Gene3D" id="3.20.20.330">
    <property type="entry name" value="Homocysteine-binding-like domain"/>
    <property type="match status" value="1"/>
</dbReference>
<dbReference type="InterPro" id="IPR017226">
    <property type="entry name" value="Betaine-hCys_S-MeTrfase_BHMT"/>
</dbReference>
<dbReference type="InterPro" id="IPR051524">
    <property type="entry name" value="BHMT"/>
</dbReference>
<dbReference type="InterPro" id="IPR003726">
    <property type="entry name" value="HCY_dom"/>
</dbReference>
<dbReference type="InterPro" id="IPR036589">
    <property type="entry name" value="HCY_dom_sf"/>
</dbReference>
<dbReference type="PANTHER" id="PTHR46120">
    <property type="entry name" value="BETAINE--HOMOCYSTEINE S-METHYLTRANSFERASE 1"/>
    <property type="match status" value="1"/>
</dbReference>
<dbReference type="PANTHER" id="PTHR46120:SF3">
    <property type="entry name" value="S-METHYLMETHIONINE--HOMOCYSTEINE S-METHYLTRANSFERASE BHMT2"/>
    <property type="match status" value="1"/>
</dbReference>
<dbReference type="Pfam" id="PF02574">
    <property type="entry name" value="S-methyl_trans"/>
    <property type="match status" value="1"/>
</dbReference>
<dbReference type="PIRSF" id="PIRSF037505">
    <property type="entry name" value="Betaine_HMT"/>
    <property type="match status" value="1"/>
</dbReference>
<dbReference type="SUPFAM" id="SSF82282">
    <property type="entry name" value="Homocysteine S-methyltransferase"/>
    <property type="match status" value="1"/>
</dbReference>
<dbReference type="PROSITE" id="PS50970">
    <property type="entry name" value="HCY"/>
    <property type="match status" value="1"/>
</dbReference>
<name>BHMT2_PONAB</name>